<sequence length="309" mass="34355">MSIRIVPKDQLGKQSEKGTTAGNIPPLLFANLKSLYTRRTERLQQLALDNPLADYLDFAAKITQAQQKALHDHPLVLDMQAELAQSAASGKPPLDLSVFPRTDHWRKLLSALIAELRHDAPDHIVAVLDNLDKASVHELELYADALLNREFAQIGSEKAPFIWAALSLYWAQMASQIPGKARAEYGEHRQFCPVCGSIPVSSVVHIGTQNGLRYLHCNLCESEWHVVRIKCSNCEQTRDLNYWSLDTELAAVKAESCGDCGTYLKILYQEKDPMVEAVADDLASLILDAKMEGEGFARSSINPFLFPGE</sequence>
<name>FDHE_YERE8</name>
<protein>
    <recommendedName>
        <fullName evidence="1">Protein FdhE homolog</fullName>
    </recommendedName>
</protein>
<proteinExistence type="inferred from homology"/>
<accession>A1JT26</accession>
<gene>
    <name evidence="1" type="primary">fdhE</name>
    <name type="ordered locus">YE4132</name>
</gene>
<keyword id="KW-0963">Cytoplasm</keyword>
<evidence type="ECO:0000255" key="1">
    <source>
        <dbReference type="HAMAP-Rule" id="MF_00611"/>
    </source>
</evidence>
<comment type="function">
    <text evidence="1">Necessary for formate dehydrogenase activity.</text>
</comment>
<comment type="subcellular location">
    <subcellularLocation>
        <location evidence="1">Cytoplasm</location>
    </subcellularLocation>
</comment>
<comment type="similarity">
    <text evidence="1">Belongs to the FdhE family.</text>
</comment>
<feature type="chain" id="PRO_1000056718" description="Protein FdhE homolog">
    <location>
        <begin position="1"/>
        <end position="309"/>
    </location>
</feature>
<organism>
    <name type="scientific">Yersinia enterocolitica serotype O:8 / biotype 1B (strain NCTC 13174 / 8081)</name>
    <dbReference type="NCBI Taxonomy" id="393305"/>
    <lineage>
        <taxon>Bacteria</taxon>
        <taxon>Pseudomonadati</taxon>
        <taxon>Pseudomonadota</taxon>
        <taxon>Gammaproteobacteria</taxon>
        <taxon>Enterobacterales</taxon>
        <taxon>Yersiniaceae</taxon>
        <taxon>Yersinia</taxon>
    </lineage>
</organism>
<reference key="1">
    <citation type="journal article" date="2006" name="PLoS Genet.">
        <title>The complete genome sequence and comparative genome analysis of the high pathogenicity Yersinia enterocolitica strain 8081.</title>
        <authorList>
            <person name="Thomson N.R."/>
            <person name="Howard S."/>
            <person name="Wren B.W."/>
            <person name="Holden M.T.G."/>
            <person name="Crossman L."/>
            <person name="Challis G.L."/>
            <person name="Churcher C."/>
            <person name="Mungall K."/>
            <person name="Brooks K."/>
            <person name="Chillingworth T."/>
            <person name="Feltwell T."/>
            <person name="Abdellah Z."/>
            <person name="Hauser H."/>
            <person name="Jagels K."/>
            <person name="Maddison M."/>
            <person name="Moule S."/>
            <person name="Sanders M."/>
            <person name="Whitehead S."/>
            <person name="Quail M.A."/>
            <person name="Dougan G."/>
            <person name="Parkhill J."/>
            <person name="Prentice M.B."/>
        </authorList>
    </citation>
    <scope>NUCLEOTIDE SEQUENCE [LARGE SCALE GENOMIC DNA]</scope>
    <source>
        <strain>NCTC 13174 / 8081</strain>
    </source>
</reference>
<dbReference type="EMBL" id="AM286415">
    <property type="protein sequence ID" value="CAL14149.1"/>
    <property type="molecule type" value="Genomic_DNA"/>
</dbReference>
<dbReference type="RefSeq" id="WP_005161934.1">
    <property type="nucleotide sequence ID" value="NC_008800.1"/>
</dbReference>
<dbReference type="RefSeq" id="YP_001008269.1">
    <property type="nucleotide sequence ID" value="NC_008800.1"/>
</dbReference>
<dbReference type="SMR" id="A1JT26"/>
<dbReference type="GeneID" id="31411013"/>
<dbReference type="KEGG" id="yen:YE4132"/>
<dbReference type="PATRIC" id="fig|393305.7.peg.4399"/>
<dbReference type="eggNOG" id="COG3058">
    <property type="taxonomic scope" value="Bacteria"/>
</dbReference>
<dbReference type="HOGENOM" id="CLU_055275_0_0_6"/>
<dbReference type="OrthoDB" id="9794151at2"/>
<dbReference type="Proteomes" id="UP000000642">
    <property type="component" value="Chromosome"/>
</dbReference>
<dbReference type="GO" id="GO:0005829">
    <property type="term" value="C:cytosol"/>
    <property type="evidence" value="ECO:0007669"/>
    <property type="project" value="TreeGrafter"/>
</dbReference>
<dbReference type="GO" id="GO:0008199">
    <property type="term" value="F:ferric iron binding"/>
    <property type="evidence" value="ECO:0007669"/>
    <property type="project" value="TreeGrafter"/>
</dbReference>
<dbReference type="GO" id="GO:0051604">
    <property type="term" value="P:protein maturation"/>
    <property type="evidence" value="ECO:0007669"/>
    <property type="project" value="TreeGrafter"/>
</dbReference>
<dbReference type="CDD" id="cd16341">
    <property type="entry name" value="FdhE"/>
    <property type="match status" value="1"/>
</dbReference>
<dbReference type="FunFam" id="3.90.1670.10:FF:000001">
    <property type="entry name" value="Protein FdhE"/>
    <property type="match status" value="1"/>
</dbReference>
<dbReference type="Gene3D" id="3.90.1670.10">
    <property type="entry name" value="FdhE-like domain"/>
    <property type="match status" value="1"/>
</dbReference>
<dbReference type="HAMAP" id="MF_00611">
    <property type="entry name" value="FdeH"/>
    <property type="match status" value="1"/>
</dbReference>
<dbReference type="InterPro" id="IPR024064">
    <property type="entry name" value="FdhE-like_sf"/>
</dbReference>
<dbReference type="InterPro" id="IPR056796">
    <property type="entry name" value="FdhE_C"/>
</dbReference>
<dbReference type="InterPro" id="IPR056797">
    <property type="entry name" value="FdhE_central"/>
</dbReference>
<dbReference type="InterPro" id="IPR056774">
    <property type="entry name" value="FdhE_N"/>
</dbReference>
<dbReference type="InterPro" id="IPR006452">
    <property type="entry name" value="Formate_DH_accessory"/>
</dbReference>
<dbReference type="NCBIfam" id="TIGR01562">
    <property type="entry name" value="FdhE"/>
    <property type="match status" value="1"/>
</dbReference>
<dbReference type="NCBIfam" id="NF002925">
    <property type="entry name" value="PRK03564.1"/>
    <property type="match status" value="1"/>
</dbReference>
<dbReference type="PANTHER" id="PTHR37689">
    <property type="entry name" value="PROTEIN FDHE"/>
    <property type="match status" value="1"/>
</dbReference>
<dbReference type="PANTHER" id="PTHR37689:SF1">
    <property type="entry name" value="PROTEIN FDHE"/>
    <property type="match status" value="1"/>
</dbReference>
<dbReference type="Pfam" id="PF24860">
    <property type="entry name" value="FdhE_C"/>
    <property type="match status" value="1"/>
</dbReference>
<dbReference type="Pfam" id="PF24859">
    <property type="entry name" value="FdhE_central"/>
    <property type="match status" value="1"/>
</dbReference>
<dbReference type="Pfam" id="PF04216">
    <property type="entry name" value="FdhE_N"/>
    <property type="match status" value="1"/>
</dbReference>
<dbReference type="PIRSF" id="PIRSF018296">
    <property type="entry name" value="Format_dh_formtn"/>
    <property type="match status" value="1"/>
</dbReference>
<dbReference type="SUPFAM" id="SSF144020">
    <property type="entry name" value="FdhE-like"/>
    <property type="match status" value="1"/>
</dbReference>